<comment type="function">
    <text evidence="1">NDH shuttles electrons from NAD(P)H:plastoquinone, via FMN and iron-sulfur (Fe-S) centers, to quinones in the photosynthetic chain and possibly in a chloroplast respiratory chain. The immediate electron acceptor for the enzyme in this species is believed to be plastoquinone. Couples the redox reaction to proton translocation, and thus conserves the redox energy in a proton gradient.</text>
</comment>
<comment type="catalytic activity">
    <reaction evidence="1">
        <text>a plastoquinone + NADH + (n+1) H(+)(in) = a plastoquinol + NAD(+) + n H(+)(out)</text>
        <dbReference type="Rhea" id="RHEA:42608"/>
        <dbReference type="Rhea" id="RHEA-COMP:9561"/>
        <dbReference type="Rhea" id="RHEA-COMP:9562"/>
        <dbReference type="ChEBI" id="CHEBI:15378"/>
        <dbReference type="ChEBI" id="CHEBI:17757"/>
        <dbReference type="ChEBI" id="CHEBI:57540"/>
        <dbReference type="ChEBI" id="CHEBI:57945"/>
        <dbReference type="ChEBI" id="CHEBI:62192"/>
    </reaction>
</comment>
<comment type="catalytic activity">
    <reaction evidence="1">
        <text>a plastoquinone + NADPH + (n+1) H(+)(in) = a plastoquinol + NADP(+) + n H(+)(out)</text>
        <dbReference type="Rhea" id="RHEA:42612"/>
        <dbReference type="Rhea" id="RHEA-COMP:9561"/>
        <dbReference type="Rhea" id="RHEA-COMP:9562"/>
        <dbReference type="ChEBI" id="CHEBI:15378"/>
        <dbReference type="ChEBI" id="CHEBI:17757"/>
        <dbReference type="ChEBI" id="CHEBI:57783"/>
        <dbReference type="ChEBI" id="CHEBI:58349"/>
        <dbReference type="ChEBI" id="CHEBI:62192"/>
    </reaction>
</comment>
<comment type="subunit">
    <text evidence="1">NDH is composed of at least 16 different subunits, 5 of which are encoded in the nucleus.</text>
</comment>
<comment type="subcellular location">
    <subcellularLocation>
        <location evidence="1">Plastid</location>
        <location evidence="1">Chloroplast thylakoid membrane</location>
        <topology evidence="1">Peripheral membrane protein</topology>
        <orientation evidence="1">Stromal side</orientation>
    </subcellularLocation>
</comment>
<comment type="similarity">
    <text evidence="1">Belongs to the complex I 49 kDa subunit family.</text>
</comment>
<proteinExistence type="inferred from homology"/>
<dbReference type="EC" id="7.1.1.-" evidence="1"/>
<dbReference type="EMBL" id="X04465">
    <property type="protein sequence ID" value="CAA28140.1"/>
    <property type="molecule type" value="Genomic_DNA"/>
</dbReference>
<dbReference type="PIR" id="S01522">
    <property type="entry name" value="A05025"/>
</dbReference>
<dbReference type="RefSeq" id="NP_039354.1">
    <property type="nucleotide sequence ID" value="NC_001319.1"/>
</dbReference>
<dbReference type="SMR" id="P12131"/>
<dbReference type="GeneID" id="2702616"/>
<dbReference type="GO" id="GO:0009535">
    <property type="term" value="C:chloroplast thylakoid membrane"/>
    <property type="evidence" value="ECO:0007669"/>
    <property type="project" value="UniProtKB-SubCell"/>
</dbReference>
<dbReference type="GO" id="GO:0051287">
    <property type="term" value="F:NAD binding"/>
    <property type="evidence" value="ECO:0007669"/>
    <property type="project" value="InterPro"/>
</dbReference>
<dbReference type="GO" id="GO:0016655">
    <property type="term" value="F:oxidoreductase activity, acting on NAD(P)H, quinone or similar compound as acceptor"/>
    <property type="evidence" value="ECO:0007669"/>
    <property type="project" value="UniProtKB-UniRule"/>
</dbReference>
<dbReference type="GO" id="GO:0048038">
    <property type="term" value="F:quinone binding"/>
    <property type="evidence" value="ECO:0007669"/>
    <property type="project" value="UniProtKB-KW"/>
</dbReference>
<dbReference type="GO" id="GO:0019684">
    <property type="term" value="P:photosynthesis, light reaction"/>
    <property type="evidence" value="ECO:0007669"/>
    <property type="project" value="UniProtKB-UniRule"/>
</dbReference>
<dbReference type="Gene3D" id="1.10.645.10">
    <property type="entry name" value="Cytochrome-c3 Hydrogenase, chain B"/>
    <property type="match status" value="1"/>
</dbReference>
<dbReference type="HAMAP" id="MF_01358">
    <property type="entry name" value="NDH1_NuoD"/>
    <property type="match status" value="1"/>
</dbReference>
<dbReference type="InterPro" id="IPR001135">
    <property type="entry name" value="NADH_Q_OxRdtase_suD"/>
</dbReference>
<dbReference type="InterPro" id="IPR014029">
    <property type="entry name" value="NADH_UbQ_OxRdtase_49kDa_CS"/>
</dbReference>
<dbReference type="InterPro" id="IPR022885">
    <property type="entry name" value="NDH1_su_D/H"/>
</dbReference>
<dbReference type="InterPro" id="IPR029014">
    <property type="entry name" value="NiFe-Hase_large"/>
</dbReference>
<dbReference type="NCBIfam" id="TIGR01962">
    <property type="entry name" value="NuoD"/>
    <property type="match status" value="1"/>
</dbReference>
<dbReference type="NCBIfam" id="NF004739">
    <property type="entry name" value="PRK06075.1"/>
    <property type="match status" value="1"/>
</dbReference>
<dbReference type="NCBIfam" id="NF005649">
    <property type="entry name" value="PRK07415.1"/>
    <property type="match status" value="1"/>
</dbReference>
<dbReference type="PANTHER" id="PTHR11993:SF10">
    <property type="entry name" value="NADH DEHYDROGENASE [UBIQUINONE] IRON-SULFUR PROTEIN 2, MITOCHONDRIAL"/>
    <property type="match status" value="1"/>
</dbReference>
<dbReference type="PANTHER" id="PTHR11993">
    <property type="entry name" value="NADH-UBIQUINONE OXIDOREDUCTASE 49 KDA SUBUNIT"/>
    <property type="match status" value="1"/>
</dbReference>
<dbReference type="Pfam" id="PF00346">
    <property type="entry name" value="Complex1_49kDa"/>
    <property type="match status" value="1"/>
</dbReference>
<dbReference type="SUPFAM" id="SSF56762">
    <property type="entry name" value="HydB/Nqo4-like"/>
    <property type="match status" value="1"/>
</dbReference>
<dbReference type="PROSITE" id="PS00535">
    <property type="entry name" value="COMPLEX1_49K"/>
    <property type="match status" value="1"/>
</dbReference>
<sequence>MMILTKNKPMIVSMGPHHPSMHGVLRLIVTLDGEDVLDCEPVLGYLHRGMEKIAENRTIVQYLPYVTRWDYLATMFTEAITVNAPEKLTNIQVPKRASYIRIIMLELSRIASHLLWLGPFMADIGAQTPFFYIFREREMIYDLFESATGMRMMHNYFRIGGVAVDLPYGWIDKCLDFCDYFLPKINEYERLITNNPIFLKRVEGIGTVTREEAINWGLSGPMLRASGVQWDLRKVDHYECYDELDWKIQWQKEGDSLARYLVRIGEMKESVKIIQQALKAIPGGPFENLEARRLNQGKNSEWNLFEYQFISKKPSPTFKLPKQEHYVRVEAPKGELGIFLIGDDSVFPWRLKIRSPGFINLQILPQLVKGMKLADIMTILGSIDIIMGEVDR</sequence>
<feature type="chain" id="PRO_0000118603" description="NAD(P)H-quinone oxidoreductase subunit H, chloroplastic">
    <location>
        <begin position="1"/>
        <end position="392"/>
    </location>
</feature>
<name>NDHH_MARPO</name>
<evidence type="ECO:0000255" key="1">
    <source>
        <dbReference type="HAMAP-Rule" id="MF_01358"/>
    </source>
</evidence>
<geneLocation type="chloroplast"/>
<organism>
    <name type="scientific">Marchantia polymorpha</name>
    <name type="common">Common liverwort</name>
    <name type="synonym">Marchantia aquatica</name>
    <dbReference type="NCBI Taxonomy" id="3197"/>
    <lineage>
        <taxon>Eukaryota</taxon>
        <taxon>Viridiplantae</taxon>
        <taxon>Streptophyta</taxon>
        <taxon>Embryophyta</taxon>
        <taxon>Marchantiophyta</taxon>
        <taxon>Marchantiopsida</taxon>
        <taxon>Marchantiidae</taxon>
        <taxon>Marchantiales</taxon>
        <taxon>Marchantiaceae</taxon>
        <taxon>Marchantia</taxon>
    </lineage>
</organism>
<protein>
    <recommendedName>
        <fullName evidence="1">NAD(P)H-quinone oxidoreductase subunit H, chloroplastic</fullName>
        <ecNumber evidence="1">7.1.1.-</ecNumber>
    </recommendedName>
    <alternativeName>
        <fullName>NAD(P)H dehydrogenase subunit H</fullName>
    </alternativeName>
    <alternativeName>
        <fullName evidence="1">NADH-plastoquinone oxidoreductase 49 kDa subunit</fullName>
    </alternativeName>
    <alternativeName>
        <fullName evidence="1">NADH-plastoquinone oxidoreductase subunit H</fullName>
    </alternativeName>
</protein>
<gene>
    <name evidence="1" type="primary">ndhH</name>
</gene>
<accession>P12131</accession>
<keyword id="KW-0150">Chloroplast</keyword>
<keyword id="KW-0472">Membrane</keyword>
<keyword id="KW-0520">NAD</keyword>
<keyword id="KW-0521">NADP</keyword>
<keyword id="KW-0934">Plastid</keyword>
<keyword id="KW-0618">Plastoquinone</keyword>
<keyword id="KW-0874">Quinone</keyword>
<keyword id="KW-0793">Thylakoid</keyword>
<keyword id="KW-1278">Translocase</keyword>
<keyword id="KW-0813">Transport</keyword>
<reference key="1">
    <citation type="journal article" date="1986" name="Nature">
        <title>Chloroplast gene organization deduced from complete sequence of liverwort Marchantia polymorpha chloroplast DNA.</title>
        <authorList>
            <person name="Ohyama K."/>
            <person name="Fukuzawa H."/>
            <person name="Kohchi T."/>
            <person name="Shirai H."/>
            <person name="Sano T."/>
            <person name="Sano S."/>
            <person name="Umesono K."/>
            <person name="Shiki Y."/>
            <person name="Takeuchi M."/>
            <person name="Chang Z."/>
            <person name="Aota S."/>
            <person name="Inokuchi H."/>
            <person name="Ozeki H."/>
        </authorList>
    </citation>
    <scope>NUCLEOTIDE SEQUENCE [LARGE SCALE GENOMIC DNA]</scope>
</reference>
<reference key="2">
    <citation type="journal article" date="1988" name="J. Mol. Biol.">
        <title>Structure and organization of Marchantia polymorpha chloroplast genome. IV. Inverted repeat and small single copy regions.</title>
        <authorList>
            <person name="Kohchi T."/>
            <person name="Shirai H."/>
            <person name="Fukuzawa H."/>
            <person name="Sano T."/>
            <person name="Komano T."/>
            <person name="Umesono K."/>
            <person name="Inokuchi H."/>
            <person name="Ozeki H."/>
            <person name="Ohyama K."/>
        </authorList>
    </citation>
    <scope>NUCLEOTIDE SEQUENCE [GENOMIC DNA]</scope>
</reference>